<name>RSMG_ALBFT</name>
<dbReference type="EC" id="2.1.1.170" evidence="1"/>
<dbReference type="EMBL" id="CP000267">
    <property type="protein sequence ID" value="ABD67812.1"/>
    <property type="molecule type" value="Genomic_DNA"/>
</dbReference>
<dbReference type="RefSeq" id="WP_011462385.1">
    <property type="nucleotide sequence ID" value="NC_007908.1"/>
</dbReference>
<dbReference type="SMR" id="Q21QL4"/>
<dbReference type="STRING" id="338969.Rfer_0050"/>
<dbReference type="KEGG" id="rfr:Rfer_0050"/>
<dbReference type="eggNOG" id="COG0357">
    <property type="taxonomic scope" value="Bacteria"/>
</dbReference>
<dbReference type="HOGENOM" id="CLU_065341_2_0_4"/>
<dbReference type="OrthoDB" id="9808773at2"/>
<dbReference type="Proteomes" id="UP000008332">
    <property type="component" value="Chromosome"/>
</dbReference>
<dbReference type="GO" id="GO:0005829">
    <property type="term" value="C:cytosol"/>
    <property type="evidence" value="ECO:0007669"/>
    <property type="project" value="TreeGrafter"/>
</dbReference>
<dbReference type="GO" id="GO:0070043">
    <property type="term" value="F:rRNA (guanine-N7-)-methyltransferase activity"/>
    <property type="evidence" value="ECO:0007669"/>
    <property type="project" value="UniProtKB-UniRule"/>
</dbReference>
<dbReference type="Gene3D" id="3.40.50.150">
    <property type="entry name" value="Vaccinia Virus protein VP39"/>
    <property type="match status" value="1"/>
</dbReference>
<dbReference type="HAMAP" id="MF_00074">
    <property type="entry name" value="16SrRNA_methyltr_G"/>
    <property type="match status" value="1"/>
</dbReference>
<dbReference type="InterPro" id="IPR003682">
    <property type="entry name" value="rRNA_ssu_MeTfrase_G"/>
</dbReference>
<dbReference type="InterPro" id="IPR029063">
    <property type="entry name" value="SAM-dependent_MTases_sf"/>
</dbReference>
<dbReference type="NCBIfam" id="TIGR00138">
    <property type="entry name" value="rsmG_gidB"/>
    <property type="match status" value="1"/>
</dbReference>
<dbReference type="PANTHER" id="PTHR31760">
    <property type="entry name" value="S-ADENOSYL-L-METHIONINE-DEPENDENT METHYLTRANSFERASES SUPERFAMILY PROTEIN"/>
    <property type="match status" value="1"/>
</dbReference>
<dbReference type="PANTHER" id="PTHR31760:SF0">
    <property type="entry name" value="S-ADENOSYL-L-METHIONINE-DEPENDENT METHYLTRANSFERASES SUPERFAMILY PROTEIN"/>
    <property type="match status" value="1"/>
</dbReference>
<dbReference type="Pfam" id="PF02527">
    <property type="entry name" value="GidB"/>
    <property type="match status" value="1"/>
</dbReference>
<dbReference type="PIRSF" id="PIRSF003078">
    <property type="entry name" value="GidB"/>
    <property type="match status" value="1"/>
</dbReference>
<dbReference type="SUPFAM" id="SSF53335">
    <property type="entry name" value="S-adenosyl-L-methionine-dependent methyltransferases"/>
    <property type="match status" value="1"/>
</dbReference>
<keyword id="KW-0963">Cytoplasm</keyword>
<keyword id="KW-0489">Methyltransferase</keyword>
<keyword id="KW-1185">Reference proteome</keyword>
<keyword id="KW-0698">rRNA processing</keyword>
<keyword id="KW-0949">S-adenosyl-L-methionine</keyword>
<keyword id="KW-0808">Transferase</keyword>
<feature type="chain" id="PRO_0000335414" description="Ribosomal RNA small subunit methyltransferase G">
    <location>
        <begin position="1"/>
        <end position="224"/>
    </location>
</feature>
<feature type="binding site" evidence="1">
    <location>
        <position position="92"/>
    </location>
    <ligand>
        <name>S-adenosyl-L-methionine</name>
        <dbReference type="ChEBI" id="CHEBI:59789"/>
    </ligand>
</feature>
<feature type="binding site" evidence="1">
    <location>
        <position position="97"/>
    </location>
    <ligand>
        <name>S-adenosyl-L-methionine</name>
        <dbReference type="ChEBI" id="CHEBI:59789"/>
    </ligand>
</feature>
<feature type="binding site" evidence="1">
    <location>
        <begin position="143"/>
        <end position="144"/>
    </location>
    <ligand>
        <name>S-adenosyl-L-methionine</name>
        <dbReference type="ChEBI" id="CHEBI:59789"/>
    </ligand>
</feature>
<feature type="binding site" evidence="1">
    <location>
        <position position="156"/>
    </location>
    <ligand>
        <name>S-adenosyl-L-methionine</name>
        <dbReference type="ChEBI" id="CHEBI:59789"/>
    </ligand>
</feature>
<comment type="function">
    <text evidence="1">Specifically methylates the N7 position of guanine in position 527 of 16S rRNA.</text>
</comment>
<comment type="catalytic activity">
    <reaction evidence="1">
        <text>guanosine(527) in 16S rRNA + S-adenosyl-L-methionine = N(7)-methylguanosine(527) in 16S rRNA + S-adenosyl-L-homocysteine</text>
        <dbReference type="Rhea" id="RHEA:42732"/>
        <dbReference type="Rhea" id="RHEA-COMP:10209"/>
        <dbReference type="Rhea" id="RHEA-COMP:10210"/>
        <dbReference type="ChEBI" id="CHEBI:57856"/>
        <dbReference type="ChEBI" id="CHEBI:59789"/>
        <dbReference type="ChEBI" id="CHEBI:74269"/>
        <dbReference type="ChEBI" id="CHEBI:74480"/>
        <dbReference type="EC" id="2.1.1.170"/>
    </reaction>
</comment>
<comment type="subcellular location">
    <subcellularLocation>
        <location evidence="1">Cytoplasm</location>
    </subcellularLocation>
</comment>
<comment type="similarity">
    <text evidence="1">Belongs to the methyltransferase superfamily. RNA methyltransferase RsmG family.</text>
</comment>
<accession>Q21QL4</accession>
<proteinExistence type="inferred from homology"/>
<evidence type="ECO:0000255" key="1">
    <source>
        <dbReference type="HAMAP-Rule" id="MF_00074"/>
    </source>
</evidence>
<organism>
    <name type="scientific">Albidiferax ferrireducens (strain ATCC BAA-621 / DSM 15236 / T118)</name>
    <name type="common">Rhodoferax ferrireducens</name>
    <dbReference type="NCBI Taxonomy" id="338969"/>
    <lineage>
        <taxon>Bacteria</taxon>
        <taxon>Pseudomonadati</taxon>
        <taxon>Pseudomonadota</taxon>
        <taxon>Betaproteobacteria</taxon>
        <taxon>Burkholderiales</taxon>
        <taxon>Comamonadaceae</taxon>
        <taxon>Rhodoferax</taxon>
    </lineage>
</organism>
<sequence length="224" mass="24268">MRELEQALRGGLADLALVLEDRQIALLLDYLALIQKWTQVYNLTAVREPAEMLTHHLLDSLAVIQPLRRQLAGLRDQTPDTDTANVRLLDVGSGAGLPGVVIAICCPEITVDCVDTVAKKVAFIRQVAATLKLANLHGLHARVESLTGPYRVICSRAFASLADFTRLSSAALAPQGLWLAMKAKDPAEEVAALPATVKVFHVEHLVVPGLGADRCIVWMRQSAV</sequence>
<gene>
    <name evidence="1" type="primary">rsmG</name>
    <name type="ordered locus">Rfer_0050</name>
</gene>
<protein>
    <recommendedName>
        <fullName evidence="1">Ribosomal RNA small subunit methyltransferase G</fullName>
        <ecNumber evidence="1">2.1.1.170</ecNumber>
    </recommendedName>
    <alternativeName>
        <fullName evidence="1">16S rRNA 7-methylguanosine methyltransferase</fullName>
        <shortName evidence="1">16S rRNA m7G methyltransferase</shortName>
    </alternativeName>
</protein>
<reference key="1">
    <citation type="submission" date="2006-02" db="EMBL/GenBank/DDBJ databases">
        <title>Complete sequence of chromosome of Rhodoferax ferrireducens DSM 15236.</title>
        <authorList>
            <person name="Copeland A."/>
            <person name="Lucas S."/>
            <person name="Lapidus A."/>
            <person name="Barry K."/>
            <person name="Detter J.C."/>
            <person name="Glavina del Rio T."/>
            <person name="Hammon N."/>
            <person name="Israni S."/>
            <person name="Pitluck S."/>
            <person name="Brettin T."/>
            <person name="Bruce D."/>
            <person name="Han C."/>
            <person name="Tapia R."/>
            <person name="Gilna P."/>
            <person name="Kiss H."/>
            <person name="Schmutz J."/>
            <person name="Larimer F."/>
            <person name="Land M."/>
            <person name="Kyrpides N."/>
            <person name="Ivanova N."/>
            <person name="Richardson P."/>
        </authorList>
    </citation>
    <scope>NUCLEOTIDE SEQUENCE [LARGE SCALE GENOMIC DNA]</scope>
    <source>
        <strain>ATCC BAA-621 / DSM 15236 / T118</strain>
    </source>
</reference>